<evidence type="ECO:0000255" key="1">
    <source>
        <dbReference type="HAMAP-Rule" id="MF_00518"/>
    </source>
</evidence>
<proteinExistence type="inferred from homology"/>
<feature type="chain" id="PRO_0000259316" description="D-aminoacyl-tRNA deacylase">
    <location>
        <begin position="1"/>
        <end position="150"/>
    </location>
</feature>
<feature type="short sequence motif" description="Gly-cisPro motif, important for rejection of L-amino acids" evidence="1">
    <location>
        <begin position="136"/>
        <end position="137"/>
    </location>
</feature>
<gene>
    <name evidence="1" type="primary">dtd</name>
    <name type="ordered locus">SAB1502c</name>
</gene>
<reference key="1">
    <citation type="journal article" date="2007" name="PLoS ONE">
        <title>Molecular correlates of host specialization in Staphylococcus aureus.</title>
        <authorList>
            <person name="Herron-Olson L."/>
            <person name="Fitzgerald J.R."/>
            <person name="Musser J.M."/>
            <person name="Kapur V."/>
        </authorList>
    </citation>
    <scope>NUCLEOTIDE SEQUENCE [LARGE SCALE GENOMIC DNA]</scope>
    <source>
        <strain>bovine RF122 / ET3-1</strain>
    </source>
</reference>
<sequence length="150" mass="16693">MKVVVQRVKEASVTNDTLNNQIKKGYCLLVGIGQDSTEQDADVIAKKIANARLFEDDNNKLNFNIQQVNGEILSVSQFTLYADVKKGNRPGFSNSKNPDQAVKIYEYFNDALRAYGLTVKTGEFGTHMNVNINNDGPVTIIYESQDGKIQ</sequence>
<name>DTD_STAAB</name>
<keyword id="KW-0963">Cytoplasm</keyword>
<keyword id="KW-0378">Hydrolase</keyword>
<keyword id="KW-0694">RNA-binding</keyword>
<keyword id="KW-0820">tRNA-binding</keyword>
<comment type="function">
    <text evidence="1">An aminoacyl-tRNA editing enzyme that deacylates mischarged D-aminoacyl-tRNAs. Also deacylates mischarged glycyl-tRNA(Ala), protecting cells against glycine mischarging by AlaRS. Acts via tRNA-based rather than protein-based catalysis; rejects L-amino acids rather than detecting D-amino acids in the active site. By recycling D-aminoacyl-tRNA to D-amino acids and free tRNA molecules, this enzyme counteracts the toxicity associated with the formation of D-aminoacyl-tRNA entities in vivo and helps enforce protein L-homochirality.</text>
</comment>
<comment type="catalytic activity">
    <reaction evidence="1">
        <text>glycyl-tRNA(Ala) + H2O = tRNA(Ala) + glycine + H(+)</text>
        <dbReference type="Rhea" id="RHEA:53744"/>
        <dbReference type="Rhea" id="RHEA-COMP:9657"/>
        <dbReference type="Rhea" id="RHEA-COMP:13640"/>
        <dbReference type="ChEBI" id="CHEBI:15377"/>
        <dbReference type="ChEBI" id="CHEBI:15378"/>
        <dbReference type="ChEBI" id="CHEBI:57305"/>
        <dbReference type="ChEBI" id="CHEBI:78442"/>
        <dbReference type="ChEBI" id="CHEBI:78522"/>
        <dbReference type="EC" id="3.1.1.96"/>
    </reaction>
</comment>
<comment type="catalytic activity">
    <reaction evidence="1">
        <text>a D-aminoacyl-tRNA + H2O = a tRNA + a D-alpha-amino acid + H(+)</text>
        <dbReference type="Rhea" id="RHEA:13953"/>
        <dbReference type="Rhea" id="RHEA-COMP:10123"/>
        <dbReference type="Rhea" id="RHEA-COMP:10124"/>
        <dbReference type="ChEBI" id="CHEBI:15377"/>
        <dbReference type="ChEBI" id="CHEBI:15378"/>
        <dbReference type="ChEBI" id="CHEBI:59871"/>
        <dbReference type="ChEBI" id="CHEBI:78442"/>
        <dbReference type="ChEBI" id="CHEBI:79333"/>
        <dbReference type="EC" id="3.1.1.96"/>
    </reaction>
</comment>
<comment type="subunit">
    <text evidence="1">Homodimer.</text>
</comment>
<comment type="subcellular location">
    <subcellularLocation>
        <location evidence="1">Cytoplasm</location>
    </subcellularLocation>
</comment>
<comment type="domain">
    <text evidence="1">A Gly-cisPro motif from one monomer fits into the active site of the other monomer to allow specific chiral rejection of L-amino acids.</text>
</comment>
<comment type="similarity">
    <text evidence="1">Belongs to the DTD family.</text>
</comment>
<organism>
    <name type="scientific">Staphylococcus aureus (strain bovine RF122 / ET3-1)</name>
    <dbReference type="NCBI Taxonomy" id="273036"/>
    <lineage>
        <taxon>Bacteria</taxon>
        <taxon>Bacillati</taxon>
        <taxon>Bacillota</taxon>
        <taxon>Bacilli</taxon>
        <taxon>Bacillales</taxon>
        <taxon>Staphylococcaceae</taxon>
        <taxon>Staphylococcus</taxon>
    </lineage>
</organism>
<protein>
    <recommendedName>
        <fullName evidence="1">D-aminoacyl-tRNA deacylase</fullName>
        <shortName evidence="1">DTD</shortName>
        <ecNumber evidence="1">3.1.1.96</ecNumber>
    </recommendedName>
    <alternativeName>
        <fullName evidence="1">Gly-tRNA(Ala) deacylase</fullName>
    </alternativeName>
</protein>
<dbReference type="EC" id="3.1.1.96" evidence="1"/>
<dbReference type="EMBL" id="AJ938182">
    <property type="protein sequence ID" value="CAI81191.1"/>
    <property type="molecule type" value="Genomic_DNA"/>
</dbReference>
<dbReference type="RefSeq" id="WP_000869981.1">
    <property type="nucleotide sequence ID" value="NC_007622.1"/>
</dbReference>
<dbReference type="SMR" id="Q2YT97"/>
<dbReference type="KEGG" id="sab:SAB1502c"/>
<dbReference type="HOGENOM" id="CLU_076901_1_0_9"/>
<dbReference type="GO" id="GO:0005737">
    <property type="term" value="C:cytoplasm"/>
    <property type="evidence" value="ECO:0007669"/>
    <property type="project" value="UniProtKB-SubCell"/>
</dbReference>
<dbReference type="GO" id="GO:0051500">
    <property type="term" value="F:D-tyrosyl-tRNA(Tyr) deacylase activity"/>
    <property type="evidence" value="ECO:0007669"/>
    <property type="project" value="TreeGrafter"/>
</dbReference>
<dbReference type="GO" id="GO:0106026">
    <property type="term" value="F:Gly-tRNA(Ala) deacylase activity"/>
    <property type="evidence" value="ECO:0007669"/>
    <property type="project" value="UniProtKB-UniRule"/>
</dbReference>
<dbReference type="GO" id="GO:0043908">
    <property type="term" value="F:Ser(Gly)-tRNA(Ala) hydrolase activity"/>
    <property type="evidence" value="ECO:0007669"/>
    <property type="project" value="UniProtKB-UniRule"/>
</dbReference>
<dbReference type="GO" id="GO:0000049">
    <property type="term" value="F:tRNA binding"/>
    <property type="evidence" value="ECO:0007669"/>
    <property type="project" value="UniProtKB-UniRule"/>
</dbReference>
<dbReference type="GO" id="GO:0019478">
    <property type="term" value="P:D-amino acid catabolic process"/>
    <property type="evidence" value="ECO:0007669"/>
    <property type="project" value="UniProtKB-UniRule"/>
</dbReference>
<dbReference type="FunFam" id="3.50.80.10:FF:000001">
    <property type="entry name" value="D-aminoacyl-tRNA deacylase"/>
    <property type="match status" value="1"/>
</dbReference>
<dbReference type="Gene3D" id="3.50.80.10">
    <property type="entry name" value="D-tyrosyl-tRNA(Tyr) deacylase"/>
    <property type="match status" value="1"/>
</dbReference>
<dbReference type="HAMAP" id="MF_00518">
    <property type="entry name" value="Deacylase_Dtd"/>
    <property type="match status" value="1"/>
</dbReference>
<dbReference type="InterPro" id="IPR003732">
    <property type="entry name" value="Daa-tRNA_deacyls_DTD"/>
</dbReference>
<dbReference type="InterPro" id="IPR023509">
    <property type="entry name" value="DTD-like_sf"/>
</dbReference>
<dbReference type="NCBIfam" id="TIGR00256">
    <property type="entry name" value="D-aminoacyl-tRNA deacylase"/>
    <property type="match status" value="1"/>
</dbReference>
<dbReference type="PANTHER" id="PTHR10472:SF5">
    <property type="entry name" value="D-AMINOACYL-TRNA DEACYLASE 1"/>
    <property type="match status" value="1"/>
</dbReference>
<dbReference type="PANTHER" id="PTHR10472">
    <property type="entry name" value="D-TYROSYL-TRNA TYR DEACYLASE"/>
    <property type="match status" value="1"/>
</dbReference>
<dbReference type="Pfam" id="PF02580">
    <property type="entry name" value="Tyr_Deacylase"/>
    <property type="match status" value="1"/>
</dbReference>
<dbReference type="SUPFAM" id="SSF69500">
    <property type="entry name" value="DTD-like"/>
    <property type="match status" value="1"/>
</dbReference>
<accession>Q2YT97</accession>